<sequence length="882" mass="98847">MVVTTSARGGGGDRTPSRRRGCGLAPAGAAALLAGASCLCYGRSLQGEFVHDDVWAIVNNPDVRPGAPLRWGIFTNDFWGKGMAENTSHKSYRPLCVLTFKLNIFLTGMNPFYFHAVNIILHCLVTLVLMYTCDKTVFKNRGLAFVTALLFAVHPIHTEAVAGIVGRADVLACLLFLLAFLSYNRSLDQGCVGGSFPSTVSPFFLLLSLFLGTCAMLVKETGITVFGVCLVYDLFSLSNKQDKSSNGALCPRSPQQPGSPQPSSLPGHPHRENGKQQRFPHKGAWGGCHSPLPPEPKSSGFPVSPRAVWSMMRFLTYSYLLAFNVWLLLAPVTLCYDWQVGSIPLVETIWDMRNLATIFLAVVMALLSLHCLAAFKRLEHKEVLVGLLFLVFPFIPASNLFFRVGFVVAERVLYMPSMGYCILFVHGLSKLCTWLNRCGATTLIVSTVLLLLLFSWKTVKQNEIWLSRESLFRSGVQTLPHNAKVHYNYANFLKDQGRNKEAIYHYRTALKLYPRHASALNNLGTLTRDTAEAKMYYQRALQLHPQHNRALFNLGNLLKSQEKKEEAITLLKDSIKYGPEFADAYSSLASLLAEQERFKEAEEIYQTGIKNCPDSSDLHNNYGVFLVDTGLPEKAVAHYQQAIKLSPSHHVAMVNLGRLYRSLGENSMAEEWYKRALQVAHKAEILSPLGALYYNTGRYEEALQIYQEAAALQPSQRELRLALAQVLAVMGQTKEAEKMTNHIVSEETGCLECYRLLSAIYSKQENHDKALDAIDKALQLKPKDPKVISELFFTKGNQLREQNLLDKAFESYRVAVQLNPDQAQAWMNMGGIQHIKGKYVSARAYYERALQLVPDSKLLKENLAKLDRLEKRLQEVREKDQT</sequence>
<organism>
    <name type="scientific">Homo sapiens</name>
    <name type="common">Human</name>
    <dbReference type="NCBI Taxonomy" id="9606"/>
    <lineage>
        <taxon>Eukaryota</taxon>
        <taxon>Metazoa</taxon>
        <taxon>Chordata</taxon>
        <taxon>Craniata</taxon>
        <taxon>Vertebrata</taxon>
        <taxon>Euteleostomi</taxon>
        <taxon>Mammalia</taxon>
        <taxon>Eutheria</taxon>
        <taxon>Euarchontoglires</taxon>
        <taxon>Primates</taxon>
        <taxon>Haplorrhini</taxon>
        <taxon>Catarrhini</taxon>
        <taxon>Hominidae</taxon>
        <taxon>Homo</taxon>
    </lineage>
</organism>
<name>TMTC1_HUMAN</name>
<dbReference type="EC" id="2.4.1.109" evidence="7"/>
<dbReference type="EMBL" id="GQ865601">
    <property type="protein sequence ID" value="ACX30004.1"/>
    <property type="molecule type" value="mRNA"/>
</dbReference>
<dbReference type="EMBL" id="AK055962">
    <property type="protein sequence ID" value="BAB71057.1"/>
    <property type="molecule type" value="mRNA"/>
</dbReference>
<dbReference type="EMBL" id="AK127297">
    <property type="protein sequence ID" value="BAC86923.1"/>
    <property type="molecule type" value="mRNA"/>
</dbReference>
<dbReference type="EMBL" id="AC009320">
    <property type="status" value="NOT_ANNOTATED_CDS"/>
    <property type="molecule type" value="Genomic_DNA"/>
</dbReference>
<dbReference type="EMBL" id="AC009510">
    <property type="status" value="NOT_ANNOTATED_CDS"/>
    <property type="molecule type" value="Genomic_DNA"/>
</dbReference>
<dbReference type="EMBL" id="AC012151">
    <property type="status" value="NOT_ANNOTATED_CDS"/>
    <property type="molecule type" value="Genomic_DNA"/>
</dbReference>
<dbReference type="EMBL" id="AC022078">
    <property type="status" value="NOT_ANNOTATED_CDS"/>
    <property type="molecule type" value="Genomic_DNA"/>
</dbReference>
<dbReference type="EMBL" id="BC028716">
    <property type="protein sequence ID" value="AAH28716.1"/>
    <property type="molecule type" value="mRNA"/>
</dbReference>
<dbReference type="EMBL" id="BC042083">
    <property type="protein sequence ID" value="AAH42083.1"/>
    <property type="molecule type" value="mRNA"/>
</dbReference>
<dbReference type="EMBL" id="AF319520">
    <property type="protein sequence ID" value="AAK32121.1"/>
    <property type="status" value="ALT_INIT"/>
    <property type="molecule type" value="mRNA"/>
</dbReference>
<dbReference type="CCDS" id="CCDS53772.1">
    <molecule id="Q8IUR5-5"/>
</dbReference>
<dbReference type="CCDS" id="CCDS8718.1">
    <molecule id="Q8IUR5-1"/>
</dbReference>
<dbReference type="RefSeq" id="NP_001180380.1">
    <molecule id="Q8IUR5-5"/>
    <property type="nucleotide sequence ID" value="NM_001193451.2"/>
</dbReference>
<dbReference type="RefSeq" id="NP_787057.2">
    <molecule id="Q8IUR5-1"/>
    <property type="nucleotide sequence ID" value="NM_175861.3"/>
</dbReference>
<dbReference type="SMR" id="Q8IUR5"/>
<dbReference type="BioGRID" id="123773">
    <property type="interactions" value="9"/>
</dbReference>
<dbReference type="FunCoup" id="Q8IUR5">
    <property type="interactions" value="37"/>
</dbReference>
<dbReference type="IntAct" id="Q8IUR5">
    <property type="interactions" value="27"/>
</dbReference>
<dbReference type="MINT" id="Q8IUR5"/>
<dbReference type="STRING" id="9606.ENSP00000442046"/>
<dbReference type="GlyCosmos" id="Q8IUR5">
    <property type="glycosylation" value="1 site, No reported glycans"/>
</dbReference>
<dbReference type="GlyGen" id="Q8IUR5">
    <property type="glycosylation" value="2 sites, 1 O-linked glycan (1 site)"/>
</dbReference>
<dbReference type="iPTMnet" id="Q8IUR5"/>
<dbReference type="PhosphoSitePlus" id="Q8IUR5"/>
<dbReference type="BioMuta" id="TMTC1"/>
<dbReference type="DMDM" id="347595775"/>
<dbReference type="jPOST" id="Q8IUR5"/>
<dbReference type="MassIVE" id="Q8IUR5"/>
<dbReference type="PaxDb" id="9606-ENSP00000442046"/>
<dbReference type="PeptideAtlas" id="Q8IUR5"/>
<dbReference type="ProteomicsDB" id="70599">
    <molecule id="Q8IUR5-5"/>
</dbReference>
<dbReference type="ProteomicsDB" id="70600">
    <molecule id="Q8IUR5-1"/>
</dbReference>
<dbReference type="ProteomicsDB" id="70601">
    <molecule id="Q8IUR5-2"/>
</dbReference>
<dbReference type="ProteomicsDB" id="70602">
    <molecule id="Q8IUR5-3"/>
</dbReference>
<dbReference type="ProteomicsDB" id="70603">
    <molecule id="Q8IUR5-4"/>
</dbReference>
<dbReference type="Antibodypedia" id="12772">
    <property type="antibodies" value="84 antibodies from 20 providers"/>
</dbReference>
<dbReference type="DNASU" id="83857"/>
<dbReference type="Ensembl" id="ENST00000256062.9">
    <molecule id="Q8IUR5-1"/>
    <property type="protein sequence ID" value="ENSP00000256062.5"/>
    <property type="gene ID" value="ENSG00000133687.16"/>
</dbReference>
<dbReference type="Ensembl" id="ENST00000539277.6">
    <molecule id="Q8IUR5-5"/>
    <property type="protein sequence ID" value="ENSP00000442046.1"/>
    <property type="gene ID" value="ENSG00000133687.16"/>
</dbReference>
<dbReference type="GeneID" id="83857"/>
<dbReference type="KEGG" id="hsa:83857"/>
<dbReference type="MANE-Select" id="ENST00000539277.6">
    <property type="protein sequence ID" value="ENSP00000442046.1"/>
    <property type="RefSeq nucleotide sequence ID" value="NM_001193451.2"/>
    <property type="RefSeq protein sequence ID" value="NP_001180380.1"/>
</dbReference>
<dbReference type="UCSC" id="uc001rjb.4">
    <molecule id="Q8IUR5-5"/>
    <property type="organism name" value="human"/>
</dbReference>
<dbReference type="AGR" id="HGNC:24099"/>
<dbReference type="CTD" id="83857"/>
<dbReference type="DisGeNET" id="83857"/>
<dbReference type="GeneCards" id="TMTC1"/>
<dbReference type="HGNC" id="HGNC:24099">
    <property type="gene designation" value="TMTC1"/>
</dbReference>
<dbReference type="HPA" id="ENSG00000133687">
    <property type="expression patterns" value="Low tissue specificity"/>
</dbReference>
<dbReference type="MIM" id="615855">
    <property type="type" value="gene"/>
</dbReference>
<dbReference type="neXtProt" id="NX_Q8IUR5"/>
<dbReference type="OpenTargets" id="ENSG00000133687"/>
<dbReference type="PharmGKB" id="PA142670718"/>
<dbReference type="VEuPathDB" id="HostDB:ENSG00000133687"/>
<dbReference type="eggNOG" id="KOG1124">
    <property type="taxonomic scope" value="Eukaryota"/>
</dbReference>
<dbReference type="GeneTree" id="ENSGT00940000158027"/>
<dbReference type="HOGENOM" id="CLU_011615_1_1_1"/>
<dbReference type="InParanoid" id="Q8IUR5"/>
<dbReference type="OMA" id="DFEQQRH"/>
<dbReference type="OrthoDB" id="19588at2759"/>
<dbReference type="PAN-GO" id="Q8IUR5">
    <property type="GO annotations" value="2 GO annotations based on evolutionary models"/>
</dbReference>
<dbReference type="PhylomeDB" id="Q8IUR5"/>
<dbReference type="TreeFam" id="TF328339"/>
<dbReference type="PathwayCommons" id="Q8IUR5"/>
<dbReference type="SignaLink" id="Q8IUR5"/>
<dbReference type="UniPathway" id="UPA00378"/>
<dbReference type="BioGRID-ORCS" id="83857">
    <property type="hits" value="9 hits in 1149 CRISPR screens"/>
</dbReference>
<dbReference type="ChiTaRS" id="TMTC1">
    <property type="organism name" value="human"/>
</dbReference>
<dbReference type="GenomeRNAi" id="83857"/>
<dbReference type="Pharos" id="Q8IUR5">
    <property type="development level" value="Tbio"/>
</dbReference>
<dbReference type="PRO" id="PR:Q8IUR5"/>
<dbReference type="Proteomes" id="UP000005640">
    <property type="component" value="Chromosome 12"/>
</dbReference>
<dbReference type="RNAct" id="Q8IUR5">
    <property type="molecule type" value="protein"/>
</dbReference>
<dbReference type="Bgee" id="ENSG00000133687">
    <property type="expression patterns" value="Expressed in dorsal root ganglion and 188 other cell types or tissues"/>
</dbReference>
<dbReference type="ExpressionAtlas" id="Q8IUR5">
    <property type="expression patterns" value="baseline and differential"/>
</dbReference>
<dbReference type="GO" id="GO:0005783">
    <property type="term" value="C:endoplasmic reticulum"/>
    <property type="evidence" value="ECO:0007669"/>
    <property type="project" value="UniProtKB-SubCell"/>
</dbReference>
<dbReference type="GO" id="GO:0016020">
    <property type="term" value="C:membrane"/>
    <property type="evidence" value="ECO:0007669"/>
    <property type="project" value="UniProtKB-SubCell"/>
</dbReference>
<dbReference type="GO" id="GO:0004169">
    <property type="term" value="F:dolichyl-phosphate-mannose-protein mannosyltransferase activity"/>
    <property type="evidence" value="ECO:0000315"/>
    <property type="project" value="UniProtKB"/>
</dbReference>
<dbReference type="GO" id="GO:0000030">
    <property type="term" value="F:mannosyltransferase activity"/>
    <property type="evidence" value="ECO:0000318"/>
    <property type="project" value="GO_Central"/>
</dbReference>
<dbReference type="GO" id="GO:0035269">
    <property type="term" value="P:protein O-linked mannosylation"/>
    <property type="evidence" value="ECO:0000315"/>
    <property type="project" value="UniProtKB"/>
</dbReference>
<dbReference type="GO" id="GO:0006396">
    <property type="term" value="P:RNA processing"/>
    <property type="evidence" value="ECO:0007669"/>
    <property type="project" value="InterPro"/>
</dbReference>
<dbReference type="FunFam" id="1.25.40.10:FF:000165">
    <property type="entry name" value="Transmembrane and tetratricopeptide repeat containing 1"/>
    <property type="match status" value="1"/>
</dbReference>
<dbReference type="FunFam" id="1.25.40.10:FF:000313">
    <property type="entry name" value="Transmembrane and tetratricopeptide repeat containing 1"/>
    <property type="match status" value="1"/>
</dbReference>
<dbReference type="FunFam" id="1.25.40.10:FF:000437">
    <property type="entry name" value="Transmembrane and tetratricopeptide repeat containing 1"/>
    <property type="match status" value="1"/>
</dbReference>
<dbReference type="FunFam" id="1.25.40.10:FF:000308">
    <property type="entry name" value="Transmembrane and tetratricopeptide repeat-containing 1"/>
    <property type="match status" value="1"/>
</dbReference>
<dbReference type="FunFam" id="1.25.40.10:FF:000526">
    <property type="entry name" value="Transmembrane and tetratricopeptide repeat-containing 1"/>
    <property type="match status" value="1"/>
</dbReference>
<dbReference type="Gene3D" id="1.25.40.10">
    <property type="entry name" value="Tetratricopeptide repeat domain"/>
    <property type="match status" value="5"/>
</dbReference>
<dbReference type="InterPro" id="IPR003107">
    <property type="entry name" value="HAT"/>
</dbReference>
<dbReference type="InterPro" id="IPR013618">
    <property type="entry name" value="TMTC_DUF1736"/>
</dbReference>
<dbReference type="InterPro" id="IPR052943">
    <property type="entry name" value="TMTC_O-mannosyl-trnsfr"/>
</dbReference>
<dbReference type="InterPro" id="IPR011990">
    <property type="entry name" value="TPR-like_helical_dom_sf"/>
</dbReference>
<dbReference type="InterPro" id="IPR013105">
    <property type="entry name" value="TPR_2"/>
</dbReference>
<dbReference type="InterPro" id="IPR019734">
    <property type="entry name" value="TPR_rpt"/>
</dbReference>
<dbReference type="PANTHER" id="PTHR44809">
    <property type="match status" value="1"/>
</dbReference>
<dbReference type="PANTHER" id="PTHR44809:SF1">
    <property type="entry name" value="PROTEIN O-MANNOSYL-TRANSFERASE TMTC1"/>
    <property type="match status" value="1"/>
</dbReference>
<dbReference type="Pfam" id="PF08409">
    <property type="entry name" value="TMTC_DUF1736"/>
    <property type="match status" value="1"/>
</dbReference>
<dbReference type="Pfam" id="PF13424">
    <property type="entry name" value="TPR_12"/>
    <property type="match status" value="1"/>
</dbReference>
<dbReference type="Pfam" id="PF13432">
    <property type="entry name" value="TPR_16"/>
    <property type="match status" value="2"/>
</dbReference>
<dbReference type="Pfam" id="PF14559">
    <property type="entry name" value="TPR_19"/>
    <property type="match status" value="1"/>
</dbReference>
<dbReference type="Pfam" id="PF07719">
    <property type="entry name" value="TPR_2"/>
    <property type="match status" value="1"/>
</dbReference>
<dbReference type="SMART" id="SM00386">
    <property type="entry name" value="HAT"/>
    <property type="match status" value="3"/>
</dbReference>
<dbReference type="SMART" id="SM00028">
    <property type="entry name" value="TPR"/>
    <property type="match status" value="10"/>
</dbReference>
<dbReference type="SUPFAM" id="SSF48452">
    <property type="entry name" value="TPR-like"/>
    <property type="match status" value="2"/>
</dbReference>
<dbReference type="PROSITE" id="PS50005">
    <property type="entry name" value="TPR"/>
    <property type="match status" value="10"/>
</dbReference>
<dbReference type="PROSITE" id="PS50293">
    <property type="entry name" value="TPR_REGION"/>
    <property type="match status" value="8"/>
</dbReference>
<accession>Q8IUR5</accession>
<accession>D0EP37</accession>
<accession>F5H8B5</accession>
<accession>Q6PIU4</accession>
<accession>Q6ZSM5</accession>
<accession>Q96N52</accession>
<accession>Q9BXM2</accession>
<proteinExistence type="evidence at protein level"/>
<keyword id="KW-0025">Alternative splicing</keyword>
<keyword id="KW-0256">Endoplasmic reticulum</keyword>
<keyword id="KW-0325">Glycoprotein</keyword>
<keyword id="KW-0472">Membrane</keyword>
<keyword id="KW-1267">Proteomics identification</keyword>
<keyword id="KW-1185">Reference proteome</keyword>
<keyword id="KW-0677">Repeat</keyword>
<keyword id="KW-0802">TPR repeat</keyword>
<keyword id="KW-0808">Transferase</keyword>
<keyword id="KW-0812">Transmembrane</keyword>
<keyword id="KW-1133">Transmembrane helix</keyword>
<protein>
    <recommendedName>
        <fullName evidence="10">Protein O-mannosyl-transferase TMTC1</fullName>
        <ecNumber evidence="7">2.4.1.109</ecNumber>
    </recommendedName>
    <alternativeName>
        <fullName evidence="11">Transmembrane O-mannosyltransferase targeting cadherins 1</fullName>
    </alternativeName>
    <alternativeName>
        <fullName evidence="11">Transmembrane and tetratricopeptide repeat-containing 1</fullName>
    </alternativeName>
</protein>
<gene>
    <name evidence="11" type="primary">TMTC1</name>
    <name type="ORF">ARG99</name>
</gene>
<comment type="function">
    <text evidence="7">Transfers mannosyl residues to the hydroxyl group of serine or threonine residues. The 4 members of the TMTC family are O-mannosyl-transferases dedicated primarily to the cadherin superfamily, each member seems to have a distinct role in decorating the cadherin domains with O-linked mannose glycans at specific regions. Also acts as O-mannosyl-transferase on other proteins such as PDIA3.</text>
</comment>
<comment type="catalytic activity">
    <reaction evidence="7">
        <text>a di-trans,poly-cis-dolichyl beta-D-mannosyl phosphate + L-seryl-[protein] = 3-O-(alpha-D-mannosyl)-L-seryl-[protein] + a di-trans,poly-cis-dolichyl phosphate + H(+)</text>
        <dbReference type="Rhea" id="RHEA:17377"/>
        <dbReference type="Rhea" id="RHEA-COMP:9863"/>
        <dbReference type="Rhea" id="RHEA-COMP:13546"/>
        <dbReference type="Rhea" id="RHEA-COMP:19498"/>
        <dbReference type="Rhea" id="RHEA-COMP:19501"/>
        <dbReference type="ChEBI" id="CHEBI:15378"/>
        <dbReference type="ChEBI" id="CHEBI:29999"/>
        <dbReference type="ChEBI" id="CHEBI:57683"/>
        <dbReference type="ChEBI" id="CHEBI:58211"/>
        <dbReference type="ChEBI" id="CHEBI:137321"/>
        <dbReference type="EC" id="2.4.1.109"/>
    </reaction>
    <physiologicalReaction direction="left-to-right" evidence="7">
        <dbReference type="Rhea" id="RHEA:17378"/>
    </physiologicalReaction>
</comment>
<comment type="catalytic activity">
    <reaction evidence="7">
        <text>a di-trans,poly-cis-dolichyl beta-D-mannosyl phosphate + L-threonyl-[protein] = 3-O-(alpha-D-mannosyl)-L-threonyl-[protein] + a di-trans,poly-cis-dolichyl phosphate + H(+)</text>
        <dbReference type="Rhea" id="RHEA:53396"/>
        <dbReference type="Rhea" id="RHEA-COMP:11060"/>
        <dbReference type="Rhea" id="RHEA-COMP:13547"/>
        <dbReference type="Rhea" id="RHEA-COMP:19498"/>
        <dbReference type="Rhea" id="RHEA-COMP:19501"/>
        <dbReference type="ChEBI" id="CHEBI:15378"/>
        <dbReference type="ChEBI" id="CHEBI:30013"/>
        <dbReference type="ChEBI" id="CHEBI:57683"/>
        <dbReference type="ChEBI" id="CHEBI:58211"/>
        <dbReference type="ChEBI" id="CHEBI:137323"/>
        <dbReference type="EC" id="2.4.1.109"/>
    </reaction>
    <physiologicalReaction direction="left-to-right" evidence="7">
        <dbReference type="Rhea" id="RHEA:53397"/>
    </physiologicalReaction>
</comment>
<comment type="pathway">
    <text evidence="7">Protein modification; protein glycosylation.</text>
</comment>
<comment type="subunit">
    <text evidence="6">May interact with FAM168B.</text>
</comment>
<comment type="interaction">
    <interactant intactId="EBI-9089156">
        <id>Q8IUR5-4</id>
    </interactant>
    <interactant intactId="EBI-11954292">
        <id>Q86V38</id>
        <label>ATN1</label>
    </interactant>
    <organismsDiffer>false</organismsDiffer>
    <experiments>3</experiments>
</comment>
<comment type="interaction">
    <interactant intactId="EBI-9089156">
        <id>Q8IUR5-4</id>
    </interactant>
    <interactant intactId="EBI-11282723">
        <id>Q9Y5Z0</id>
        <label>BACE2</label>
    </interactant>
    <organismsDiffer>false</organismsDiffer>
    <experiments>3</experiments>
</comment>
<comment type="interaction">
    <interactant intactId="EBI-9089156">
        <id>Q8IUR5-4</id>
    </interactant>
    <interactant intactId="EBI-10988864">
        <id>P46379-2</id>
        <label>BAG6</label>
    </interactant>
    <organismsDiffer>false</organismsDiffer>
    <experiments>3</experiments>
</comment>
<comment type="interaction">
    <interactant intactId="EBI-9089156">
        <id>Q8IUR5-4</id>
    </interactant>
    <interactant intactId="EBI-6875961">
        <id>P02489</id>
        <label>CRYAA</label>
    </interactant>
    <organismsDiffer>false</organismsDiffer>
    <experiments>3</experiments>
</comment>
<comment type="interaction">
    <interactant intactId="EBI-9089156">
        <id>Q8IUR5-4</id>
    </interactant>
    <interactant intactId="EBI-395638">
        <id>O14645</id>
        <label>DNALI1</label>
    </interactant>
    <organismsDiffer>false</organismsDiffer>
    <experiments>3</experiments>
</comment>
<comment type="interaction">
    <interactant intactId="EBI-9089156">
        <id>Q8IUR5-4</id>
    </interactant>
    <interactant intactId="EBI-356015">
        <id>Q14204</id>
        <label>DYNC1H1</label>
    </interactant>
    <organismsDiffer>false</organismsDiffer>
    <experiments>3</experiments>
</comment>
<comment type="interaction">
    <interactant intactId="EBI-9089156">
        <id>Q8IUR5-4</id>
    </interactant>
    <interactant intactId="EBI-25852368">
        <id>O75460-2</id>
        <label>ERN1</label>
    </interactant>
    <organismsDiffer>false</organismsDiffer>
    <experiments>3</experiments>
</comment>
<comment type="interaction">
    <interactant intactId="EBI-9089156">
        <id>Q8IUR5-4</id>
    </interactant>
    <interactant intactId="EBI-2565863">
        <id>P00488</id>
        <label>F13A1</label>
    </interactant>
    <organismsDiffer>false</organismsDiffer>
    <experiments>3</experiments>
</comment>
<comment type="interaction">
    <interactant intactId="EBI-9089156">
        <id>Q8IUR5-4</id>
    </interactant>
    <interactant intactId="EBI-348399">
        <id>P22607</id>
        <label>FGFR3</label>
    </interactant>
    <organismsDiffer>false</organismsDiffer>
    <experiments>3</experiments>
</comment>
<comment type="interaction">
    <interactant intactId="EBI-9089156">
        <id>Q8IUR5-4</id>
    </interactant>
    <interactant intactId="EBI-10226858">
        <id>Q0VDC6</id>
        <label>FKBP1A</label>
    </interactant>
    <organismsDiffer>false</organismsDiffer>
    <experiments>3</experiments>
</comment>
<comment type="interaction">
    <interactant intactId="EBI-9089156">
        <id>Q8IUR5-4</id>
    </interactant>
    <interactant intactId="EBI-8285963">
        <id>Q14957</id>
        <label>GRIN2C</label>
    </interactant>
    <organismsDiffer>false</organismsDiffer>
    <experiments>3</experiments>
</comment>
<comment type="interaction">
    <interactant intactId="EBI-9089156">
        <id>Q8IUR5-4</id>
    </interactant>
    <interactant intactId="EBI-351506">
        <id>P06396</id>
        <label>GSN</label>
    </interactant>
    <organismsDiffer>false</organismsDiffer>
    <experiments>3</experiments>
</comment>
<comment type="interaction">
    <interactant intactId="EBI-9089156">
        <id>Q8IUR5-4</id>
    </interactant>
    <interactant intactId="EBI-350145">
        <id>P01112</id>
        <label>HRAS</label>
    </interactant>
    <organismsDiffer>false</organismsDiffer>
    <experiments>3</experiments>
</comment>
<comment type="interaction">
    <interactant intactId="EBI-9089156">
        <id>Q8IUR5-4</id>
    </interactant>
    <interactant intactId="EBI-352682">
        <id>P04792</id>
        <label>HSPB1</label>
    </interactant>
    <organismsDiffer>false</organismsDiffer>
    <experiments>3</experiments>
</comment>
<comment type="interaction">
    <interactant intactId="EBI-9089156">
        <id>Q8IUR5-4</id>
    </interactant>
    <interactant intactId="EBI-466029">
        <id>P42858</id>
        <label>HTT</label>
    </interactant>
    <organismsDiffer>false</organismsDiffer>
    <experiments>6</experiments>
</comment>
<comment type="interaction">
    <interactant intactId="EBI-9089156">
        <id>Q8IUR5-4</id>
    </interactant>
    <interactant intactId="EBI-751501">
        <id>Q9Y2W7</id>
        <label>KCNIP3</label>
    </interactant>
    <organismsDiffer>false</organismsDiffer>
    <experiments>3</experiments>
</comment>
<comment type="interaction">
    <interactant intactId="EBI-9089156">
        <id>Q8IUR5-4</id>
    </interactant>
    <interactant intactId="EBI-10975473">
        <id>O60333-2</id>
        <label>KIF1B</label>
    </interactant>
    <organismsDiffer>false</organismsDiffer>
    <experiments>3</experiments>
</comment>
<comment type="interaction">
    <interactant intactId="EBI-9089156">
        <id>Q8IUR5-4</id>
    </interactant>
    <interactant intactId="EBI-948266">
        <id>O14901</id>
        <label>KLF11</label>
    </interactant>
    <organismsDiffer>false</organismsDiffer>
    <experiments>3</experiments>
</comment>
<comment type="interaction">
    <interactant intactId="EBI-9089156">
        <id>Q8IUR5-4</id>
    </interactant>
    <interactant intactId="EBI-2432309">
        <id>Q92876</id>
        <label>KLK6</label>
    </interactant>
    <organismsDiffer>false</organismsDiffer>
    <experiments>3</experiments>
</comment>
<comment type="interaction">
    <interactant intactId="EBI-9089156">
        <id>Q8IUR5-4</id>
    </interactant>
    <interactant intactId="EBI-2811583">
        <id>Q9BVL2</id>
        <label>NUP58</label>
    </interactant>
    <organismsDiffer>false</organismsDiffer>
    <experiments>3</experiments>
</comment>
<comment type="interaction">
    <interactant intactId="EBI-9089156">
        <id>Q8IUR5-4</id>
    </interactant>
    <interactant intactId="EBI-50433196">
        <id>A0A6Q8PF08</id>
        <label>PMP22</label>
    </interactant>
    <organismsDiffer>false</organismsDiffer>
    <experiments>3</experiments>
</comment>
<comment type="interaction">
    <interactant intactId="EBI-9089156">
        <id>Q8IUR5-4</id>
    </interactant>
    <interactant intactId="EBI-749195">
        <id>P60891</id>
        <label>PRPS1</label>
    </interactant>
    <organismsDiffer>false</organismsDiffer>
    <experiments>3</experiments>
</comment>
<comment type="interaction">
    <interactant intactId="EBI-9089156">
        <id>Q8IUR5-4</id>
    </interactant>
    <interactant intactId="EBI-720609">
        <id>O76024</id>
        <label>WFS1</label>
    </interactant>
    <organismsDiffer>false</organismsDiffer>
    <experiments>3</experiments>
</comment>
<comment type="interaction">
    <interactant intactId="EBI-9089156">
        <id>Q8IUR5-4</id>
    </interactant>
    <interactant intactId="EBI-25900580">
        <id>Q9Y649</id>
    </interactant>
    <organismsDiffer>false</organismsDiffer>
    <experiments>3</experiments>
</comment>
<comment type="subcellular location">
    <subcellularLocation>
        <location evidence="1">Membrane</location>
        <topology evidence="1">Multi-pass membrane protein</topology>
    </subcellularLocation>
    <subcellularLocation>
        <location evidence="10">Endoplasmic reticulum</location>
    </subcellularLocation>
</comment>
<comment type="alternative products">
    <event type="alternative splicing"/>
    <isoform>
        <id>Q8IUR5-5</id>
        <name>5</name>
        <sequence type="displayed"/>
    </isoform>
    <isoform>
        <id>Q8IUR5-1</id>
        <name>1</name>
        <sequence type="described" ref="VSP_041823"/>
    </isoform>
    <isoform>
        <id>Q8IUR5-2</id>
        <name>2</name>
        <sequence type="described" ref="VSP_023612 VSP_023613"/>
    </isoform>
    <isoform>
        <id>Q8IUR5-3</id>
        <name>3</name>
        <sequence type="described" ref="VSP_041823 VSP_023614 VSP_023615 VSP_023616"/>
    </isoform>
    <isoform>
        <id>Q8IUR5-4</id>
        <name>4</name>
        <sequence type="described" ref="VSP_023611 VSP_023617"/>
    </isoform>
</comment>
<comment type="similarity">
    <text evidence="10">Belongs to the TMTC family.</text>
</comment>
<comment type="sequence caution" evidence="10">
    <conflict type="erroneous initiation">
        <sequence resource="EMBL-CDS" id="AAK32121"/>
    </conflict>
    <text>Truncated N-terminus.</text>
</comment>
<reference key="1">
    <citation type="submission" date="2009-09" db="EMBL/GenBank/DDBJ databases">
        <title>TMTC1A: A novel member of TPR motif family, as a potential chaperone of HSP70 and HSP90.</title>
        <authorList>
            <person name="Shen M.Q."/>
            <person name="Gu W.J."/>
            <person name="Fu H.L."/>
            <person name="Li J.M."/>
        </authorList>
    </citation>
    <scope>NUCLEOTIDE SEQUENCE [MRNA] (ISOFORM 5)</scope>
    <source>
        <tissue>Mammary gland</tissue>
    </source>
</reference>
<reference key="2">
    <citation type="journal article" date="2004" name="Nat. Genet.">
        <title>Complete sequencing and characterization of 21,243 full-length human cDNAs.</title>
        <authorList>
            <person name="Ota T."/>
            <person name="Suzuki Y."/>
            <person name="Nishikawa T."/>
            <person name="Otsuki T."/>
            <person name="Sugiyama T."/>
            <person name="Irie R."/>
            <person name="Wakamatsu A."/>
            <person name="Hayashi K."/>
            <person name="Sato H."/>
            <person name="Nagai K."/>
            <person name="Kimura K."/>
            <person name="Makita H."/>
            <person name="Sekine M."/>
            <person name="Obayashi M."/>
            <person name="Nishi T."/>
            <person name="Shibahara T."/>
            <person name="Tanaka T."/>
            <person name="Ishii S."/>
            <person name="Yamamoto J."/>
            <person name="Saito K."/>
            <person name="Kawai Y."/>
            <person name="Isono Y."/>
            <person name="Nakamura Y."/>
            <person name="Nagahari K."/>
            <person name="Murakami K."/>
            <person name="Yasuda T."/>
            <person name="Iwayanagi T."/>
            <person name="Wagatsuma M."/>
            <person name="Shiratori A."/>
            <person name="Sudo H."/>
            <person name="Hosoiri T."/>
            <person name="Kaku Y."/>
            <person name="Kodaira H."/>
            <person name="Kondo H."/>
            <person name="Sugawara M."/>
            <person name="Takahashi M."/>
            <person name="Kanda K."/>
            <person name="Yokoi T."/>
            <person name="Furuya T."/>
            <person name="Kikkawa E."/>
            <person name="Omura Y."/>
            <person name="Abe K."/>
            <person name="Kamihara K."/>
            <person name="Katsuta N."/>
            <person name="Sato K."/>
            <person name="Tanikawa M."/>
            <person name="Yamazaki M."/>
            <person name="Ninomiya K."/>
            <person name="Ishibashi T."/>
            <person name="Yamashita H."/>
            <person name="Murakawa K."/>
            <person name="Fujimori K."/>
            <person name="Tanai H."/>
            <person name="Kimata M."/>
            <person name="Watanabe M."/>
            <person name="Hiraoka S."/>
            <person name="Chiba Y."/>
            <person name="Ishida S."/>
            <person name="Ono Y."/>
            <person name="Takiguchi S."/>
            <person name="Watanabe S."/>
            <person name="Yosida M."/>
            <person name="Hotuta T."/>
            <person name="Kusano J."/>
            <person name="Kanehori K."/>
            <person name="Takahashi-Fujii A."/>
            <person name="Hara H."/>
            <person name="Tanase T.-O."/>
            <person name="Nomura Y."/>
            <person name="Togiya S."/>
            <person name="Komai F."/>
            <person name="Hara R."/>
            <person name="Takeuchi K."/>
            <person name="Arita M."/>
            <person name="Imose N."/>
            <person name="Musashino K."/>
            <person name="Yuuki H."/>
            <person name="Oshima A."/>
            <person name="Sasaki N."/>
            <person name="Aotsuka S."/>
            <person name="Yoshikawa Y."/>
            <person name="Matsunawa H."/>
            <person name="Ichihara T."/>
            <person name="Shiohata N."/>
            <person name="Sano S."/>
            <person name="Moriya S."/>
            <person name="Momiyama H."/>
            <person name="Satoh N."/>
            <person name="Takami S."/>
            <person name="Terashima Y."/>
            <person name="Suzuki O."/>
            <person name="Nakagawa S."/>
            <person name="Senoh A."/>
            <person name="Mizoguchi H."/>
            <person name="Goto Y."/>
            <person name="Shimizu F."/>
            <person name="Wakebe H."/>
            <person name="Hishigaki H."/>
            <person name="Watanabe T."/>
            <person name="Sugiyama A."/>
            <person name="Takemoto M."/>
            <person name="Kawakami B."/>
            <person name="Yamazaki M."/>
            <person name="Watanabe K."/>
            <person name="Kumagai A."/>
            <person name="Itakura S."/>
            <person name="Fukuzumi Y."/>
            <person name="Fujimori Y."/>
            <person name="Komiyama M."/>
            <person name="Tashiro H."/>
            <person name="Tanigami A."/>
            <person name="Fujiwara T."/>
            <person name="Ono T."/>
            <person name="Yamada K."/>
            <person name="Fujii Y."/>
            <person name="Ozaki K."/>
            <person name="Hirao M."/>
            <person name="Ohmori Y."/>
            <person name="Kawabata A."/>
            <person name="Hikiji T."/>
            <person name="Kobatake N."/>
            <person name="Inagaki H."/>
            <person name="Ikema Y."/>
            <person name="Okamoto S."/>
            <person name="Okitani R."/>
            <person name="Kawakami T."/>
            <person name="Noguchi S."/>
            <person name="Itoh T."/>
            <person name="Shigeta K."/>
            <person name="Senba T."/>
            <person name="Matsumura K."/>
            <person name="Nakajima Y."/>
            <person name="Mizuno T."/>
            <person name="Morinaga M."/>
            <person name="Sasaki M."/>
            <person name="Togashi T."/>
            <person name="Oyama M."/>
            <person name="Hata H."/>
            <person name="Watanabe M."/>
            <person name="Komatsu T."/>
            <person name="Mizushima-Sugano J."/>
            <person name="Satoh T."/>
            <person name="Shirai Y."/>
            <person name="Takahashi Y."/>
            <person name="Nakagawa K."/>
            <person name="Okumura K."/>
            <person name="Nagase T."/>
            <person name="Nomura N."/>
            <person name="Kikuchi H."/>
            <person name="Masuho Y."/>
            <person name="Yamashita R."/>
            <person name="Nakai K."/>
            <person name="Yada T."/>
            <person name="Nakamura Y."/>
            <person name="Ohara O."/>
            <person name="Isogai T."/>
            <person name="Sugano S."/>
        </authorList>
    </citation>
    <scope>NUCLEOTIDE SEQUENCE [LARGE SCALE MRNA] (ISOFORMS 2 AND 3)</scope>
    <source>
        <tissue>Hippocampus</tissue>
    </source>
</reference>
<reference key="3">
    <citation type="journal article" date="2006" name="Nature">
        <title>The finished DNA sequence of human chromosome 12.</title>
        <authorList>
            <person name="Scherer S.E."/>
            <person name="Muzny D.M."/>
            <person name="Buhay C.J."/>
            <person name="Chen R."/>
            <person name="Cree A."/>
            <person name="Ding Y."/>
            <person name="Dugan-Rocha S."/>
            <person name="Gill R."/>
            <person name="Gunaratne P."/>
            <person name="Harris R.A."/>
            <person name="Hawes A.C."/>
            <person name="Hernandez J."/>
            <person name="Hodgson A.V."/>
            <person name="Hume J."/>
            <person name="Jackson A."/>
            <person name="Khan Z.M."/>
            <person name="Kovar-Smith C."/>
            <person name="Lewis L.R."/>
            <person name="Lozado R.J."/>
            <person name="Metzker M.L."/>
            <person name="Milosavljevic A."/>
            <person name="Miner G.R."/>
            <person name="Montgomery K.T."/>
            <person name="Morgan M.B."/>
            <person name="Nazareth L.V."/>
            <person name="Scott G."/>
            <person name="Sodergren E."/>
            <person name="Song X.-Z."/>
            <person name="Steffen D."/>
            <person name="Lovering R.C."/>
            <person name="Wheeler D.A."/>
            <person name="Worley K.C."/>
            <person name="Yuan Y."/>
            <person name="Zhang Z."/>
            <person name="Adams C.Q."/>
            <person name="Ansari-Lari M.A."/>
            <person name="Ayele M."/>
            <person name="Brown M.J."/>
            <person name="Chen G."/>
            <person name="Chen Z."/>
            <person name="Clerc-Blankenburg K.P."/>
            <person name="Davis C."/>
            <person name="Delgado O."/>
            <person name="Dinh H.H."/>
            <person name="Draper H."/>
            <person name="Gonzalez-Garay M.L."/>
            <person name="Havlak P."/>
            <person name="Jackson L.R."/>
            <person name="Jacob L.S."/>
            <person name="Kelly S.H."/>
            <person name="Li L."/>
            <person name="Li Z."/>
            <person name="Liu J."/>
            <person name="Liu W."/>
            <person name="Lu J."/>
            <person name="Maheshwari M."/>
            <person name="Nguyen B.-V."/>
            <person name="Okwuonu G.O."/>
            <person name="Pasternak S."/>
            <person name="Perez L.M."/>
            <person name="Plopper F.J.H."/>
            <person name="Santibanez J."/>
            <person name="Shen H."/>
            <person name="Tabor P.E."/>
            <person name="Verduzco D."/>
            <person name="Waldron L."/>
            <person name="Wang Q."/>
            <person name="Williams G.A."/>
            <person name="Zhang J."/>
            <person name="Zhou J."/>
            <person name="Allen C.C."/>
            <person name="Amin A.G."/>
            <person name="Anyalebechi V."/>
            <person name="Bailey M."/>
            <person name="Barbaria J.A."/>
            <person name="Bimage K.E."/>
            <person name="Bryant N.P."/>
            <person name="Burch P.E."/>
            <person name="Burkett C.E."/>
            <person name="Burrell K.L."/>
            <person name="Calderon E."/>
            <person name="Cardenas V."/>
            <person name="Carter K."/>
            <person name="Casias K."/>
            <person name="Cavazos I."/>
            <person name="Cavazos S.R."/>
            <person name="Ceasar H."/>
            <person name="Chacko J."/>
            <person name="Chan S.N."/>
            <person name="Chavez D."/>
            <person name="Christopoulos C."/>
            <person name="Chu J."/>
            <person name="Cockrell R."/>
            <person name="Cox C.D."/>
            <person name="Dang M."/>
            <person name="Dathorne S.R."/>
            <person name="David R."/>
            <person name="Davis C.M."/>
            <person name="Davy-Carroll L."/>
            <person name="Deshazo D.R."/>
            <person name="Donlin J.E."/>
            <person name="D'Souza L."/>
            <person name="Eaves K.A."/>
            <person name="Egan A."/>
            <person name="Emery-Cohen A.J."/>
            <person name="Escotto M."/>
            <person name="Flagg N."/>
            <person name="Forbes L.D."/>
            <person name="Gabisi A.M."/>
            <person name="Garza M."/>
            <person name="Hamilton C."/>
            <person name="Henderson N."/>
            <person name="Hernandez O."/>
            <person name="Hines S."/>
            <person name="Hogues M.E."/>
            <person name="Huang M."/>
            <person name="Idlebird D.G."/>
            <person name="Johnson R."/>
            <person name="Jolivet A."/>
            <person name="Jones S."/>
            <person name="Kagan R."/>
            <person name="King L.M."/>
            <person name="Leal B."/>
            <person name="Lebow H."/>
            <person name="Lee S."/>
            <person name="LeVan J.M."/>
            <person name="Lewis L.C."/>
            <person name="London P."/>
            <person name="Lorensuhewa L.M."/>
            <person name="Loulseged H."/>
            <person name="Lovett D.A."/>
            <person name="Lucier A."/>
            <person name="Lucier R.L."/>
            <person name="Ma J."/>
            <person name="Madu R.C."/>
            <person name="Mapua P."/>
            <person name="Martindale A.D."/>
            <person name="Martinez E."/>
            <person name="Massey E."/>
            <person name="Mawhiney S."/>
            <person name="Meador M.G."/>
            <person name="Mendez S."/>
            <person name="Mercado C."/>
            <person name="Mercado I.C."/>
            <person name="Merritt C.E."/>
            <person name="Miner Z.L."/>
            <person name="Minja E."/>
            <person name="Mitchell T."/>
            <person name="Mohabbat F."/>
            <person name="Mohabbat K."/>
            <person name="Montgomery B."/>
            <person name="Moore N."/>
            <person name="Morris S."/>
            <person name="Munidasa M."/>
            <person name="Ngo R.N."/>
            <person name="Nguyen N.B."/>
            <person name="Nickerson E."/>
            <person name="Nwaokelemeh O.O."/>
            <person name="Nwokenkwo S."/>
            <person name="Obregon M."/>
            <person name="Oguh M."/>
            <person name="Oragunye N."/>
            <person name="Oviedo R.J."/>
            <person name="Parish B.J."/>
            <person name="Parker D.N."/>
            <person name="Parrish J."/>
            <person name="Parks K.L."/>
            <person name="Paul H.A."/>
            <person name="Payton B.A."/>
            <person name="Perez A."/>
            <person name="Perrin W."/>
            <person name="Pickens A."/>
            <person name="Primus E.L."/>
            <person name="Pu L.-L."/>
            <person name="Puazo M."/>
            <person name="Quiles M.M."/>
            <person name="Quiroz J.B."/>
            <person name="Rabata D."/>
            <person name="Reeves K."/>
            <person name="Ruiz S.J."/>
            <person name="Shao H."/>
            <person name="Sisson I."/>
            <person name="Sonaike T."/>
            <person name="Sorelle R.P."/>
            <person name="Sutton A.E."/>
            <person name="Svatek A.F."/>
            <person name="Svetz L.A."/>
            <person name="Tamerisa K.S."/>
            <person name="Taylor T.R."/>
            <person name="Teague B."/>
            <person name="Thomas N."/>
            <person name="Thorn R.D."/>
            <person name="Trejos Z.Y."/>
            <person name="Trevino B.K."/>
            <person name="Ukegbu O.N."/>
            <person name="Urban J.B."/>
            <person name="Vasquez L.I."/>
            <person name="Vera V.A."/>
            <person name="Villasana D.M."/>
            <person name="Wang L."/>
            <person name="Ward-Moore S."/>
            <person name="Warren J.T."/>
            <person name="Wei X."/>
            <person name="White F."/>
            <person name="Williamson A.L."/>
            <person name="Wleczyk R."/>
            <person name="Wooden H.S."/>
            <person name="Wooden S.H."/>
            <person name="Yen J."/>
            <person name="Yoon L."/>
            <person name="Yoon V."/>
            <person name="Zorrilla S.E."/>
            <person name="Nelson D."/>
            <person name="Kucherlapati R."/>
            <person name="Weinstock G."/>
            <person name="Gibbs R.A."/>
        </authorList>
    </citation>
    <scope>NUCLEOTIDE SEQUENCE [LARGE SCALE GENOMIC DNA]</scope>
</reference>
<reference key="4">
    <citation type="journal article" date="2004" name="Genome Res.">
        <title>The status, quality, and expansion of the NIH full-length cDNA project: the Mammalian Gene Collection (MGC).</title>
        <authorList>
            <consortium name="The MGC Project Team"/>
        </authorList>
    </citation>
    <scope>NUCLEOTIDE SEQUENCE [LARGE SCALE MRNA] (ISOFORMS 1 AND 4)</scope>
    <scope>VARIANT LEU-814</scope>
    <source>
        <tissue>Pancreas</tissue>
        <tissue>Testis</tissue>
    </source>
</reference>
<reference key="5">
    <citation type="submission" date="2000-11" db="EMBL/GenBank/DDBJ databases">
        <title>Gene cloning of human adenocarcinoma cell line.</title>
        <authorList>
            <person name="Yanqiu Z."/>
            <person name="Huazhang A."/>
            <person name="Fei L."/>
            <person name="Yongquan S."/>
            <person name="Xin W."/>
            <person name="Taidong Q."/>
            <person name="Baojun C."/>
            <person name="Kaichun W."/>
            <person name="Jie D."/>
            <person name="Daiming F."/>
        </authorList>
    </citation>
    <scope>NUCLEOTIDE SEQUENCE [MRNA] OF 704-882 (ISOFORMS 1/2/4/5)</scope>
    <source>
        <tissue>Stomach cancer</tissue>
    </source>
</reference>
<reference key="6">
    <citation type="journal article" date="2012" name="FEBS Lett.">
        <title>Characterizing the neurite outgrowth inhibitory effect of Mani.</title>
        <authorList>
            <person name="Mishra M."/>
            <person name="Lee S."/>
            <person name="Lin M.K."/>
            <person name="Yamashita T."/>
            <person name="Heese K."/>
        </authorList>
    </citation>
    <scope>INTERACTION WITH FAM168B</scope>
</reference>
<reference key="7">
    <citation type="journal article" date="2017" name="Proc. Natl. Acad. Sci. U.S.A.">
        <title>Discovery of an O-mannosylation pathway selectively serving cadherins and protocadherins.</title>
        <authorList>
            <person name="Larsen I.S.B."/>
            <person name="Narimatsu Y."/>
            <person name="Joshi H.J."/>
            <person name="Siukstaite L."/>
            <person name="Harrison O.J."/>
            <person name="Brasch J."/>
            <person name="Goodman K.M."/>
            <person name="Hansen L."/>
            <person name="Shapiro L."/>
            <person name="Honig B."/>
            <person name="Vakhrushev S.Y."/>
            <person name="Clausen H."/>
            <person name="Halim A."/>
        </authorList>
    </citation>
    <scope>FUNCTION</scope>
    <scope>CATALYTIC ACTIVITY</scope>
    <scope>PATHWAY</scope>
</reference>
<evidence type="ECO:0000255" key="1"/>
<evidence type="ECO:0000255" key="2">
    <source>
        <dbReference type="PROSITE-ProRule" id="PRU00339"/>
    </source>
</evidence>
<evidence type="ECO:0000255" key="3">
    <source>
        <dbReference type="PROSITE-ProRule" id="PRU00498"/>
    </source>
</evidence>
<evidence type="ECO:0000256" key="4">
    <source>
        <dbReference type="SAM" id="MobiDB-lite"/>
    </source>
</evidence>
<evidence type="ECO:0000269" key="5">
    <source>
    </source>
</evidence>
<evidence type="ECO:0000269" key="6">
    <source>
    </source>
</evidence>
<evidence type="ECO:0000269" key="7">
    <source>
    </source>
</evidence>
<evidence type="ECO:0000303" key="8">
    <source>
    </source>
</evidence>
<evidence type="ECO:0000303" key="9">
    <source>
    </source>
</evidence>
<evidence type="ECO:0000305" key="10"/>
<evidence type="ECO:0000312" key="11">
    <source>
        <dbReference type="HGNC" id="HGNC:24099"/>
    </source>
</evidence>
<feature type="topological domain" description="Cytoplasmic" evidence="10">
    <location>
        <begin position="1"/>
        <end position="20"/>
    </location>
</feature>
<feature type="transmembrane region" description="Helical" evidence="1">
    <location>
        <begin position="21"/>
        <end position="41"/>
    </location>
</feature>
<feature type="topological domain" description="Extracellular" evidence="10">
    <location>
        <begin position="42"/>
        <end position="110"/>
    </location>
</feature>
<feature type="transmembrane region" description="Helical" evidence="1">
    <location>
        <begin position="111"/>
        <end position="131"/>
    </location>
</feature>
<feature type="topological domain" description="Cytoplasmic" evidence="10">
    <location>
        <begin position="132"/>
        <end position="137"/>
    </location>
</feature>
<feature type="transmembrane region" description="Helical" evidence="1">
    <location>
        <begin position="138"/>
        <end position="157"/>
    </location>
</feature>
<feature type="topological domain" description="Extracellular" evidence="10">
    <location>
        <begin position="158"/>
        <end position="160"/>
    </location>
</feature>
<feature type="transmembrane region" description="Helical" evidence="1">
    <location>
        <begin position="161"/>
        <end position="181"/>
    </location>
</feature>
<feature type="topological domain" description="Cytoplasmic" evidence="10">
    <location>
        <begin position="182"/>
        <end position="197"/>
    </location>
</feature>
<feature type="transmembrane region" description="Helical" evidence="1">
    <location>
        <begin position="198"/>
        <end position="218"/>
    </location>
</feature>
<feature type="topological domain" description="Extracellular" evidence="10">
    <location>
        <begin position="219"/>
        <end position="221"/>
    </location>
</feature>
<feature type="transmembrane region" description="Helical" evidence="1">
    <location>
        <begin position="222"/>
        <end position="238"/>
    </location>
</feature>
<feature type="topological domain" description="Cytoplasmic" evidence="10">
    <location>
        <begin position="239"/>
        <end position="313"/>
    </location>
</feature>
<feature type="transmembrane region" description="Helical" evidence="1">
    <location>
        <begin position="314"/>
        <end position="334"/>
    </location>
</feature>
<feature type="topological domain" description="Extracellular" evidence="10">
    <location>
        <begin position="335"/>
        <end position="354"/>
    </location>
</feature>
<feature type="transmembrane region" description="Helical" evidence="1">
    <location>
        <begin position="355"/>
        <end position="375"/>
    </location>
</feature>
<feature type="topological domain" description="Cytoplasmic" evidence="10">
    <location>
        <begin position="376"/>
        <end position="381"/>
    </location>
</feature>
<feature type="transmembrane region" description="Helical" evidence="1">
    <location>
        <begin position="382"/>
        <end position="402"/>
    </location>
</feature>
<feature type="topological domain" description="Extracellular" evidence="10">
    <location>
        <position position="403"/>
    </location>
</feature>
<feature type="transmembrane region" description="Helical" evidence="1">
    <location>
        <begin position="404"/>
        <end position="424"/>
    </location>
</feature>
<feature type="topological domain" description="Cytoplasmic" evidence="10">
    <location>
        <begin position="425"/>
        <end position="438"/>
    </location>
</feature>
<feature type="transmembrane region" description="Helical" evidence="1">
    <location>
        <begin position="439"/>
        <end position="459"/>
    </location>
</feature>
<feature type="topological domain" description="Extracellular" evidence="10">
    <location>
        <begin position="460"/>
        <end position="882"/>
    </location>
</feature>
<feature type="repeat" description="TPR 1" evidence="2">
    <location>
        <begin position="483"/>
        <end position="516"/>
    </location>
</feature>
<feature type="repeat" description="TPR 2" evidence="2">
    <location>
        <begin position="517"/>
        <end position="547"/>
    </location>
</feature>
<feature type="repeat" description="TPR 3" evidence="2">
    <location>
        <begin position="548"/>
        <end position="581"/>
    </location>
</feature>
<feature type="repeat" description="TPR 4" evidence="2">
    <location>
        <begin position="582"/>
        <end position="615"/>
    </location>
</feature>
<feature type="repeat" description="TPR 5" evidence="2">
    <location>
        <begin position="616"/>
        <end position="649"/>
    </location>
</feature>
<feature type="repeat" description="TPR 6" evidence="2">
    <location>
        <begin position="650"/>
        <end position="682"/>
    </location>
</feature>
<feature type="repeat" description="TPR 7" evidence="2">
    <location>
        <begin position="683"/>
        <end position="716"/>
    </location>
</feature>
<feature type="repeat" description="TPR 8" evidence="2">
    <location>
        <begin position="751"/>
        <end position="784"/>
    </location>
</feature>
<feature type="repeat" description="TPR 9" evidence="2">
    <location>
        <begin position="789"/>
        <end position="822"/>
    </location>
</feature>
<feature type="repeat" description="TPR 10" evidence="2">
    <location>
        <begin position="823"/>
        <end position="856"/>
    </location>
</feature>
<feature type="region of interest" description="Disordered" evidence="4">
    <location>
        <begin position="1"/>
        <end position="20"/>
    </location>
</feature>
<feature type="region of interest" description="Disordered" evidence="4">
    <location>
        <begin position="246"/>
        <end position="277"/>
    </location>
</feature>
<feature type="compositionally biased region" description="Low complexity" evidence="4">
    <location>
        <begin position="251"/>
        <end position="267"/>
    </location>
</feature>
<feature type="glycosylation site" description="N-linked (GlcNAc...) asparagine" evidence="3">
    <location>
        <position position="86"/>
    </location>
</feature>
<feature type="splice variant" id="VSP_023611" description="In isoform 4." evidence="9">
    <location>
        <begin position="1"/>
        <end position="652"/>
    </location>
</feature>
<feature type="splice variant" id="VSP_023612" description="In isoform 2." evidence="8">
    <location>
        <begin position="1"/>
        <end position="237"/>
    </location>
</feature>
<feature type="splice variant" id="VSP_041823" description="In isoform 1 and isoform 3." evidence="8 9">
    <location>
        <begin position="1"/>
        <end position="108"/>
    </location>
</feature>
<feature type="splice variant" id="VSP_023613" description="In isoform 2." evidence="8">
    <original>SNKQDKSSNGALCPRSPQQPGSPQPSSLPGHPHRENGKQQRFPHKGAWGGCHSPLPPEPKSSGFPVSPRAVWSMM</original>
    <variation>MTKQDSASKKKKKRYLRASSNRNFLLTMRPFLKRAILVLSYVLVILYFRLWIMGGSMPLFSEQDNPASFSPYILT</variation>
    <location>
        <begin position="238"/>
        <end position="312"/>
    </location>
</feature>
<feature type="splice variant" id="VSP_023614" description="In isoform 3." evidence="8">
    <original>M</original>
    <variation>MRYLRASSNRNFLLTMRPFLKRAILVLSYVLVILYFRLWIMGGSMPLFSEQDNPASFSPYILT</variation>
    <location>
        <position position="312"/>
    </location>
</feature>
<feature type="splice variant" id="VSP_023615" description="In isoform 3." evidence="8">
    <original>ERFKEAEEIYQTGIKNCPDSSDLHN</original>
    <variation>VIVSHSSFFQCYCYMYKLMLHRFLY</variation>
    <location>
        <begin position="596"/>
        <end position="620"/>
    </location>
</feature>
<feature type="splice variant" id="VSP_023616" description="In isoform 3." evidence="8">
    <location>
        <begin position="621"/>
        <end position="882"/>
    </location>
</feature>
<feature type="splice variant" id="VSP_023617" description="In isoform 4." evidence="9">
    <original>WYKR</original>
    <variation>C</variation>
    <location>
        <begin position="672"/>
        <end position="675"/>
    </location>
</feature>
<feature type="sequence variant" id="VAR_031112" description="In dbSNP:rs17854190." evidence="5">
    <original>V</original>
    <variation>L</variation>
    <location>
        <position position="814"/>
    </location>
</feature>